<sequence>MSGQLERCEREWHELEGEFQELQETHRIYKQKLEELNALQTSCSSSINKQKTRLKDLKLTLQRYKRHASREEAELVQQMGANIKERQNVFFDMEAYLPKKNGLYLNLVLGNVNVTLLSNQAKFAYKDEYEKFKLYLTIILLLGAVACRFFLHYRVTDEVFNFLLVWYYCTLTIRESILISNGSRIKGWWVSHHYVSTFLSGVMLTWPNGLIYQKFRNQFLAFSIFQSCVQFLQYYYQRGCLYRLRALGERNHLDLTVEGFQSWMWRGLTFLLPFLFCGHFWQLYNAVTLFELSSHEECREWQVFVLALTFLVLFLGNFLTTLKVVHTKLQQNRSKAKKP</sequence>
<feature type="chain" id="PRO_0000309528" description="Transmembrane protein 120B">
    <location>
        <begin position="1"/>
        <end position="339"/>
    </location>
</feature>
<feature type="transmembrane region" description="Helical" evidence="2">
    <location>
        <begin position="102"/>
        <end position="124"/>
    </location>
</feature>
<feature type="transmembrane region" description="Helical" evidence="2">
    <location>
        <begin position="132"/>
        <end position="152"/>
    </location>
</feature>
<feature type="transmembrane region" description="Helical" evidence="2">
    <location>
        <begin position="159"/>
        <end position="179"/>
    </location>
</feature>
<feature type="transmembrane region" description="Helical" evidence="2">
    <location>
        <begin position="187"/>
        <end position="207"/>
    </location>
</feature>
<feature type="transmembrane region" description="Helical" evidence="2">
    <location>
        <begin position="270"/>
        <end position="290"/>
    </location>
</feature>
<feature type="transmembrane region" description="Helical" evidence="2">
    <location>
        <begin position="302"/>
        <end position="322"/>
    </location>
</feature>
<feature type="coiled-coil region" evidence="2">
    <location>
        <begin position="1"/>
        <end position="77"/>
    </location>
</feature>
<protein>
    <recommendedName>
        <fullName>Transmembrane protein 120B</fullName>
    </recommendedName>
</protein>
<evidence type="ECO:0000250" key="1">
    <source>
        <dbReference type="UniProtKB" id="Q3TA38"/>
    </source>
</evidence>
<evidence type="ECO:0000255" key="2"/>
<evidence type="ECO:0000305" key="3"/>
<reference key="1">
    <citation type="submission" date="2007-07" db="EMBL/GenBank/DDBJ databases">
        <authorList>
            <consortium name="NIH - Mammalian Gene Collection (MGC) project"/>
        </authorList>
    </citation>
    <scope>NUCLEOTIDE SEQUENCE [LARGE SCALE MRNA]</scope>
    <source>
        <strain>Hereford</strain>
        <tissue>Fetal pons</tissue>
    </source>
</reference>
<name>T120B_BOVIN</name>
<gene>
    <name type="primary">TMEM120B</name>
</gene>
<comment type="function">
    <text evidence="1">Necessary for efficient adipogenesis. Does not show ion channel activity.</text>
</comment>
<comment type="subunit">
    <text evidence="1">Heterooligomer with TMEM120A.</text>
</comment>
<comment type="subcellular location">
    <subcellularLocation>
        <location evidence="1">Nucleus inner membrane</location>
        <topology evidence="2">Multi-pass membrane protein</topology>
    </subcellularLocation>
</comment>
<comment type="similarity">
    <text evidence="3">Belongs to the TMEM120 family.</text>
</comment>
<accession>A6QPF8</accession>
<proteinExistence type="evidence at transcript level"/>
<organism>
    <name type="scientific">Bos taurus</name>
    <name type="common">Bovine</name>
    <dbReference type="NCBI Taxonomy" id="9913"/>
    <lineage>
        <taxon>Eukaryota</taxon>
        <taxon>Metazoa</taxon>
        <taxon>Chordata</taxon>
        <taxon>Craniata</taxon>
        <taxon>Vertebrata</taxon>
        <taxon>Euteleostomi</taxon>
        <taxon>Mammalia</taxon>
        <taxon>Eutheria</taxon>
        <taxon>Laurasiatheria</taxon>
        <taxon>Artiodactyla</taxon>
        <taxon>Ruminantia</taxon>
        <taxon>Pecora</taxon>
        <taxon>Bovidae</taxon>
        <taxon>Bovinae</taxon>
        <taxon>Bos</taxon>
    </lineage>
</organism>
<keyword id="KW-0175">Coiled coil</keyword>
<keyword id="KW-0472">Membrane</keyword>
<keyword id="KW-0539">Nucleus</keyword>
<keyword id="KW-1185">Reference proteome</keyword>
<keyword id="KW-0812">Transmembrane</keyword>
<keyword id="KW-1133">Transmembrane helix</keyword>
<dbReference type="EMBL" id="BC149295">
    <property type="protein sequence ID" value="AAI49296.1"/>
    <property type="molecule type" value="mRNA"/>
</dbReference>
<dbReference type="RefSeq" id="NP_001095378.1">
    <property type="nucleotide sequence ID" value="NM_001101908.2"/>
</dbReference>
<dbReference type="SMR" id="A6QPF8"/>
<dbReference type="FunCoup" id="A6QPF8">
    <property type="interactions" value="414"/>
</dbReference>
<dbReference type="STRING" id="9913.ENSBTAP00000062036"/>
<dbReference type="PaxDb" id="9913-ENSBTAP00000012636"/>
<dbReference type="GeneID" id="508790"/>
<dbReference type="KEGG" id="bta:508790"/>
<dbReference type="CTD" id="144404"/>
<dbReference type="VEuPathDB" id="HostDB:ENSBTAG00000009602"/>
<dbReference type="eggNOG" id="KOG4758">
    <property type="taxonomic scope" value="Eukaryota"/>
</dbReference>
<dbReference type="HOGENOM" id="CLU_048749_1_1_1"/>
<dbReference type="InParanoid" id="A6QPF8"/>
<dbReference type="OMA" id="WPNTGPW"/>
<dbReference type="OrthoDB" id="2015098at2759"/>
<dbReference type="TreeFam" id="TF313552"/>
<dbReference type="Proteomes" id="UP000009136">
    <property type="component" value="Chromosome 17"/>
</dbReference>
<dbReference type="Bgee" id="ENSBTAG00000009602">
    <property type="expression patterns" value="Expressed in mammary gland and 105 other cell types or tissues"/>
</dbReference>
<dbReference type="GO" id="GO:0005637">
    <property type="term" value="C:nuclear inner membrane"/>
    <property type="evidence" value="ECO:0000250"/>
    <property type="project" value="UniProtKB"/>
</dbReference>
<dbReference type="GO" id="GO:0045444">
    <property type="term" value="P:fat cell differentiation"/>
    <property type="evidence" value="ECO:0000250"/>
    <property type="project" value="UniProtKB"/>
</dbReference>
<dbReference type="GO" id="GO:0051291">
    <property type="term" value="P:protein heterooligomerization"/>
    <property type="evidence" value="ECO:0000250"/>
    <property type="project" value="UniProtKB"/>
</dbReference>
<dbReference type="InterPro" id="IPR012926">
    <property type="entry name" value="TMEM120A/B"/>
</dbReference>
<dbReference type="PANTHER" id="PTHR21433:SF2">
    <property type="entry name" value="TRANSMEMBRANE PROTEIN 120B"/>
    <property type="match status" value="1"/>
</dbReference>
<dbReference type="PANTHER" id="PTHR21433">
    <property type="entry name" value="TRANSMEMBRANE PROTEIN INDUCED BY TUMOR NECROSIS FACTOR ALPHA"/>
    <property type="match status" value="1"/>
</dbReference>
<dbReference type="Pfam" id="PF07851">
    <property type="entry name" value="TMEM120A-B"/>
    <property type="match status" value="1"/>
</dbReference>